<feature type="chain" id="PRO_0000155854" description="Ribonuclease Z">
    <location>
        <begin position="1"/>
        <end position="306"/>
    </location>
</feature>
<feature type="active site" description="Proton acceptor" evidence="1">
    <location>
        <position position="67"/>
    </location>
</feature>
<feature type="binding site" evidence="1">
    <location>
        <position position="63"/>
    </location>
    <ligand>
        <name>Zn(2+)</name>
        <dbReference type="ChEBI" id="CHEBI:29105"/>
        <label>1</label>
        <note>catalytic</note>
    </ligand>
</feature>
<feature type="binding site" evidence="1">
    <location>
        <position position="65"/>
    </location>
    <ligand>
        <name>Zn(2+)</name>
        <dbReference type="ChEBI" id="CHEBI:29105"/>
        <label>1</label>
        <note>catalytic</note>
    </ligand>
</feature>
<feature type="binding site" evidence="1">
    <location>
        <position position="67"/>
    </location>
    <ligand>
        <name>Zn(2+)</name>
        <dbReference type="ChEBI" id="CHEBI:29105"/>
        <label>2</label>
        <note>catalytic</note>
    </ligand>
</feature>
<feature type="binding site" evidence="1">
    <location>
        <position position="68"/>
    </location>
    <ligand>
        <name>Zn(2+)</name>
        <dbReference type="ChEBI" id="CHEBI:29105"/>
        <label>2</label>
        <note>catalytic</note>
    </ligand>
</feature>
<feature type="binding site" evidence="1">
    <location>
        <position position="141"/>
    </location>
    <ligand>
        <name>Zn(2+)</name>
        <dbReference type="ChEBI" id="CHEBI:29105"/>
        <label>1</label>
        <note>catalytic</note>
    </ligand>
</feature>
<feature type="binding site" evidence="1">
    <location>
        <position position="208"/>
    </location>
    <ligand>
        <name>Zn(2+)</name>
        <dbReference type="ChEBI" id="CHEBI:29105"/>
        <label>1</label>
        <note>catalytic</note>
    </ligand>
</feature>
<feature type="binding site" evidence="1">
    <location>
        <position position="208"/>
    </location>
    <ligand>
        <name>Zn(2+)</name>
        <dbReference type="ChEBI" id="CHEBI:29105"/>
        <label>2</label>
        <note>catalytic</note>
    </ligand>
</feature>
<feature type="binding site" evidence="1">
    <location>
        <position position="266"/>
    </location>
    <ligand>
        <name>Zn(2+)</name>
        <dbReference type="ChEBI" id="CHEBI:29105"/>
        <label>2</label>
        <note>catalytic</note>
    </ligand>
</feature>
<reference key="1">
    <citation type="journal article" date="2005" name="Genome Res.">
        <title>The Chlamydophila abortus genome sequence reveals an array of variable proteins that contribute to interspecies variation.</title>
        <authorList>
            <person name="Thomson N.R."/>
            <person name="Yeats C."/>
            <person name="Bell K."/>
            <person name="Holden M.T.G."/>
            <person name="Bentley S.D."/>
            <person name="Livingstone M."/>
            <person name="Cerdeno-Tarraga A.-M."/>
            <person name="Harris B."/>
            <person name="Doggett J."/>
            <person name="Ormond D."/>
            <person name="Mungall K."/>
            <person name="Clarke K."/>
            <person name="Feltwell T."/>
            <person name="Hance Z."/>
            <person name="Sanders M."/>
            <person name="Quail M.A."/>
            <person name="Price C."/>
            <person name="Barrell B.G."/>
            <person name="Parkhill J."/>
            <person name="Longbottom D."/>
        </authorList>
    </citation>
    <scope>NUCLEOTIDE SEQUENCE [LARGE SCALE GENOMIC DNA]</scope>
    <source>
        <strain>DSM 27085 / S26/3</strain>
    </source>
</reference>
<sequence>MSCRELVILGCSSQQPTRTRNQGAYLFRWNNEGLLFDPGEGTQRQFIFANIAPTIVSRIFISHFHGDHCLGLGSMLMRLNLDKVTHPIHCYYPASGKKYFDRLRYGTIYHETIRVIEHPIDKEGIVEDFGNFRIEARKLNHLVDTLGWRITEPDTIKFIPEKIKAAGLRGPIMQDLLRNEHVTVNGKTLYLKDLSYIRKGDSIAVIADTLPCPSIVDLAKNARIMLCESTYLEEHSHLAESHYHMTAKQAATQALAAGAQQLVLTHFSARYLNSKEFEIEAGKIFPNVTAAEEFRSYPFPKNPSSK</sequence>
<protein>
    <recommendedName>
        <fullName evidence="1">Ribonuclease Z</fullName>
        <shortName evidence="1">RNase Z</shortName>
        <ecNumber evidence="1">3.1.26.11</ecNumber>
    </recommendedName>
    <alternativeName>
        <fullName evidence="1">tRNA 3 endonuclease</fullName>
    </alternativeName>
    <alternativeName>
        <fullName evidence="1">tRNase Z</fullName>
    </alternativeName>
</protein>
<evidence type="ECO:0000255" key="1">
    <source>
        <dbReference type="HAMAP-Rule" id="MF_01818"/>
    </source>
</evidence>
<name>RNZ_CHLAB</name>
<proteinExistence type="inferred from homology"/>
<gene>
    <name evidence="1" type="primary">rnz</name>
    <name type="ordered locus">CAB313</name>
</gene>
<comment type="function">
    <text evidence="1">Zinc phosphodiesterase, which displays some tRNA 3'-processing endonuclease activity. Probably involved in tRNA maturation, by removing a 3'-trailer from precursor tRNA.</text>
</comment>
<comment type="catalytic activity">
    <reaction evidence="1">
        <text>Endonucleolytic cleavage of RNA, removing extra 3' nucleotides from tRNA precursor, generating 3' termini of tRNAs. A 3'-hydroxy group is left at the tRNA terminus and a 5'-phosphoryl group is left at the trailer molecule.</text>
        <dbReference type="EC" id="3.1.26.11"/>
    </reaction>
</comment>
<comment type="cofactor">
    <cofactor evidence="1">
        <name>Zn(2+)</name>
        <dbReference type="ChEBI" id="CHEBI:29105"/>
    </cofactor>
    <text evidence="1">Binds 2 Zn(2+) ions.</text>
</comment>
<comment type="subunit">
    <text evidence="1">Homodimer.</text>
</comment>
<comment type="similarity">
    <text evidence="1">Belongs to the RNase Z family.</text>
</comment>
<accession>Q5L6G2</accession>
<keyword id="KW-0255">Endonuclease</keyword>
<keyword id="KW-0378">Hydrolase</keyword>
<keyword id="KW-0479">Metal-binding</keyword>
<keyword id="KW-0540">Nuclease</keyword>
<keyword id="KW-0819">tRNA processing</keyword>
<keyword id="KW-0862">Zinc</keyword>
<organism>
    <name type="scientific">Chlamydia abortus (strain DSM 27085 / S26/3)</name>
    <name type="common">Chlamydophila abortus</name>
    <dbReference type="NCBI Taxonomy" id="218497"/>
    <lineage>
        <taxon>Bacteria</taxon>
        <taxon>Pseudomonadati</taxon>
        <taxon>Chlamydiota</taxon>
        <taxon>Chlamydiia</taxon>
        <taxon>Chlamydiales</taxon>
        <taxon>Chlamydiaceae</taxon>
        <taxon>Chlamydia/Chlamydophila group</taxon>
        <taxon>Chlamydia</taxon>
    </lineage>
</organism>
<dbReference type="EC" id="3.1.26.11" evidence="1"/>
<dbReference type="EMBL" id="CR848038">
    <property type="protein sequence ID" value="CAH63763.1"/>
    <property type="molecule type" value="Genomic_DNA"/>
</dbReference>
<dbReference type="RefSeq" id="WP_011096978.1">
    <property type="nucleotide sequence ID" value="NC_004552.2"/>
</dbReference>
<dbReference type="SMR" id="Q5L6G2"/>
<dbReference type="KEGG" id="cab:CAB313"/>
<dbReference type="eggNOG" id="COG1234">
    <property type="taxonomic scope" value="Bacteria"/>
</dbReference>
<dbReference type="HOGENOM" id="CLU_031317_2_1_0"/>
<dbReference type="OrthoDB" id="9800940at2"/>
<dbReference type="Proteomes" id="UP000001012">
    <property type="component" value="Chromosome"/>
</dbReference>
<dbReference type="GO" id="GO:0042781">
    <property type="term" value="F:3'-tRNA processing endoribonuclease activity"/>
    <property type="evidence" value="ECO:0007669"/>
    <property type="project" value="UniProtKB-UniRule"/>
</dbReference>
<dbReference type="GO" id="GO:0008270">
    <property type="term" value="F:zinc ion binding"/>
    <property type="evidence" value="ECO:0007669"/>
    <property type="project" value="UniProtKB-UniRule"/>
</dbReference>
<dbReference type="CDD" id="cd07717">
    <property type="entry name" value="RNaseZ_ZiPD-like_MBL-fold"/>
    <property type="match status" value="1"/>
</dbReference>
<dbReference type="Gene3D" id="3.60.15.10">
    <property type="entry name" value="Ribonuclease Z/Hydroxyacylglutathione hydrolase-like"/>
    <property type="match status" value="1"/>
</dbReference>
<dbReference type="HAMAP" id="MF_01818">
    <property type="entry name" value="RNase_Z_BN"/>
    <property type="match status" value="1"/>
</dbReference>
<dbReference type="InterPro" id="IPR001279">
    <property type="entry name" value="Metallo-B-lactamas"/>
</dbReference>
<dbReference type="InterPro" id="IPR036866">
    <property type="entry name" value="RibonucZ/Hydroxyglut_hydro"/>
</dbReference>
<dbReference type="InterPro" id="IPR013471">
    <property type="entry name" value="RNase_Z/BN"/>
</dbReference>
<dbReference type="NCBIfam" id="NF000804">
    <property type="entry name" value="PRK00055.2-1"/>
    <property type="match status" value="1"/>
</dbReference>
<dbReference type="NCBIfam" id="TIGR02651">
    <property type="entry name" value="RNase_Z"/>
    <property type="match status" value="1"/>
</dbReference>
<dbReference type="PANTHER" id="PTHR46018">
    <property type="entry name" value="ZINC PHOSPHODIESTERASE ELAC PROTEIN 1"/>
    <property type="match status" value="1"/>
</dbReference>
<dbReference type="PANTHER" id="PTHR46018:SF2">
    <property type="entry name" value="ZINC PHOSPHODIESTERASE ELAC PROTEIN 1"/>
    <property type="match status" value="1"/>
</dbReference>
<dbReference type="Pfam" id="PF00753">
    <property type="entry name" value="Lactamase_B"/>
    <property type="match status" value="1"/>
</dbReference>
<dbReference type="SUPFAM" id="SSF56281">
    <property type="entry name" value="Metallo-hydrolase/oxidoreductase"/>
    <property type="match status" value="1"/>
</dbReference>